<comment type="catalytic activity">
    <reaction evidence="3">
        <text>L-glutamate + NAD(+) + H2O = 2-oxoglutarate + NH4(+) + NADH + H(+)</text>
        <dbReference type="Rhea" id="RHEA:15133"/>
        <dbReference type="ChEBI" id="CHEBI:15377"/>
        <dbReference type="ChEBI" id="CHEBI:15378"/>
        <dbReference type="ChEBI" id="CHEBI:16810"/>
        <dbReference type="ChEBI" id="CHEBI:28938"/>
        <dbReference type="ChEBI" id="CHEBI:29985"/>
        <dbReference type="ChEBI" id="CHEBI:57540"/>
        <dbReference type="ChEBI" id="CHEBI:57945"/>
        <dbReference type="EC" id="1.4.1.3"/>
    </reaction>
</comment>
<comment type="catalytic activity">
    <reaction evidence="3">
        <text>L-glutamate + NADP(+) + H2O = 2-oxoglutarate + NH4(+) + NADPH + H(+)</text>
        <dbReference type="Rhea" id="RHEA:11612"/>
        <dbReference type="ChEBI" id="CHEBI:15377"/>
        <dbReference type="ChEBI" id="CHEBI:15378"/>
        <dbReference type="ChEBI" id="CHEBI:16810"/>
        <dbReference type="ChEBI" id="CHEBI:28938"/>
        <dbReference type="ChEBI" id="CHEBI:29985"/>
        <dbReference type="ChEBI" id="CHEBI:57783"/>
        <dbReference type="ChEBI" id="CHEBI:58349"/>
        <dbReference type="EC" id="1.4.1.3"/>
    </reaction>
</comment>
<comment type="subunit">
    <text evidence="1">Homohexamer.</text>
</comment>
<comment type="subcellular location">
    <subcellularLocation>
        <location evidence="1">Cytoplasm</location>
    </subcellularLocation>
</comment>
<comment type="similarity">
    <text evidence="4">Belongs to the Glu/Leu/Phe/Val dehydrogenases family.</text>
</comment>
<protein>
    <recommendedName>
        <fullName>Glutamate dehydrogenase</fullName>
        <shortName>GDH</shortName>
        <ecNumber>1.4.1.3</ecNumber>
    </recommendedName>
</protein>
<gene>
    <name type="primary">gdhA</name>
    <name type="synonym">gdh</name>
</gene>
<sequence>MVEQDPFEIAVKQLERAAQHMKISEEALEFLKRPQRIVEVTIPVEMDDGSVKVFTGFRVQYNWARGPTKGGIRWHPEETLSTVKALAAWMTWKTAVMDLPYGGGKGGIIVDPKKLSDREKERLARGYIRAVYDIISPYEDIPAPDVYTNPQIMAWMMDEYETIARRKTPAFGIITGKPLSIGGSLGRNEATARGASYTIREAAKVLGWDGLKGKTIAIQGYGNAGYYLAKIMSEDYGMKVVAVSDSKGGIYNPDGLNADEVLKWKREHGSVKDFPGATNISNEELLELDVDVLAPAAIEEVITKKNADNIKAKIVAEVANGPVTPEADEILFEKGILQIPDFLCNAGGVTVSYFEWVQNITGYYWTLEEVRERLDKKMTKAFYDVYNTAKEKNIHMRDAAYVVAVQRVYQAMLDRGWVKH</sequence>
<keyword id="KW-0963">Cytoplasm</keyword>
<keyword id="KW-0520">NAD</keyword>
<keyword id="KW-0521">NADP</keyword>
<keyword id="KW-0560">Oxidoreductase</keyword>
<dbReference type="EC" id="1.4.1.3"/>
<dbReference type="EMBL" id="AF035935">
    <property type="protein sequence ID" value="AAB99956.1"/>
    <property type="molecule type" value="Genomic_DNA"/>
</dbReference>
<dbReference type="RefSeq" id="WP_048053436.1">
    <property type="nucleotide sequence ID" value="NZ_DUJN01000002.1"/>
</dbReference>
<dbReference type="SMR" id="P0CL72"/>
<dbReference type="GeneID" id="1442446"/>
<dbReference type="OMA" id="MIMGWMM"/>
<dbReference type="GO" id="GO:0005737">
    <property type="term" value="C:cytoplasm"/>
    <property type="evidence" value="ECO:0007669"/>
    <property type="project" value="UniProtKB-SubCell"/>
</dbReference>
<dbReference type="GO" id="GO:0004352">
    <property type="term" value="F:glutamate dehydrogenase (NAD+) activity"/>
    <property type="evidence" value="ECO:0007669"/>
    <property type="project" value="RHEA"/>
</dbReference>
<dbReference type="GO" id="GO:0004354">
    <property type="term" value="F:glutamate dehydrogenase (NADP+) activity"/>
    <property type="evidence" value="ECO:0007669"/>
    <property type="project" value="RHEA"/>
</dbReference>
<dbReference type="GO" id="GO:0006538">
    <property type="term" value="P:glutamate catabolic process"/>
    <property type="evidence" value="ECO:0007669"/>
    <property type="project" value="TreeGrafter"/>
</dbReference>
<dbReference type="CDD" id="cd01076">
    <property type="entry name" value="NAD_bind_1_Glu_DH"/>
    <property type="match status" value="1"/>
</dbReference>
<dbReference type="FunFam" id="3.40.50.10860:FF:000003">
    <property type="entry name" value="Glutamate dehydrogenase"/>
    <property type="match status" value="1"/>
</dbReference>
<dbReference type="Gene3D" id="3.40.50.10860">
    <property type="entry name" value="Leucine Dehydrogenase, chain A, domain 1"/>
    <property type="match status" value="1"/>
</dbReference>
<dbReference type="Gene3D" id="3.40.50.720">
    <property type="entry name" value="NAD(P)-binding Rossmann-like Domain"/>
    <property type="match status" value="1"/>
</dbReference>
<dbReference type="InterPro" id="IPR046346">
    <property type="entry name" value="Aminoacid_DH-like_N_sf"/>
</dbReference>
<dbReference type="InterPro" id="IPR053388">
    <property type="entry name" value="GLPV_dehydrogenases"/>
</dbReference>
<dbReference type="InterPro" id="IPR006095">
    <property type="entry name" value="Glu/Leu/Phe/Val/Trp_DH"/>
</dbReference>
<dbReference type="InterPro" id="IPR006096">
    <property type="entry name" value="Glu/Leu/Phe/Val/Trp_DH_C"/>
</dbReference>
<dbReference type="InterPro" id="IPR006097">
    <property type="entry name" value="Glu/Leu/Phe/Val/Trp_DH_dimer"/>
</dbReference>
<dbReference type="InterPro" id="IPR033524">
    <property type="entry name" value="Glu/Leu/Phe/Val_DH_AS"/>
</dbReference>
<dbReference type="InterPro" id="IPR014362">
    <property type="entry name" value="Glu_DH"/>
</dbReference>
<dbReference type="InterPro" id="IPR036291">
    <property type="entry name" value="NAD(P)-bd_dom_sf"/>
</dbReference>
<dbReference type="InterPro" id="IPR033922">
    <property type="entry name" value="NAD_bind_Glu_DH"/>
</dbReference>
<dbReference type="NCBIfam" id="NF040817">
    <property type="entry name" value="GdhA_Arch"/>
    <property type="match status" value="1"/>
</dbReference>
<dbReference type="PANTHER" id="PTHR11606">
    <property type="entry name" value="GLUTAMATE DEHYDROGENASE"/>
    <property type="match status" value="1"/>
</dbReference>
<dbReference type="PANTHER" id="PTHR11606:SF13">
    <property type="entry name" value="GLUTAMATE DEHYDROGENASE 1, MITOCHONDRIAL"/>
    <property type="match status" value="1"/>
</dbReference>
<dbReference type="Pfam" id="PF00208">
    <property type="entry name" value="ELFV_dehydrog"/>
    <property type="match status" value="1"/>
</dbReference>
<dbReference type="Pfam" id="PF02812">
    <property type="entry name" value="ELFV_dehydrog_N"/>
    <property type="match status" value="1"/>
</dbReference>
<dbReference type="PIRSF" id="PIRSF000185">
    <property type="entry name" value="Glu_DH"/>
    <property type="match status" value="1"/>
</dbReference>
<dbReference type="PRINTS" id="PR00082">
    <property type="entry name" value="GLFDHDRGNASE"/>
</dbReference>
<dbReference type="SMART" id="SM00839">
    <property type="entry name" value="ELFV_dehydrog"/>
    <property type="match status" value="1"/>
</dbReference>
<dbReference type="SUPFAM" id="SSF53223">
    <property type="entry name" value="Aminoacid dehydrogenase-like, N-terminal domain"/>
    <property type="match status" value="1"/>
</dbReference>
<dbReference type="SUPFAM" id="SSF51735">
    <property type="entry name" value="NAD(P)-binding Rossmann-fold domains"/>
    <property type="match status" value="1"/>
</dbReference>
<dbReference type="PROSITE" id="PS00074">
    <property type="entry name" value="GLFV_DEHYDROGENASE"/>
    <property type="match status" value="1"/>
</dbReference>
<proteinExistence type="inferred from homology"/>
<feature type="chain" id="PRO_0000182758" description="Glutamate dehydrogenase">
    <location>
        <begin position="1"/>
        <end position="420"/>
    </location>
</feature>
<feature type="active site" evidence="3">
    <location>
        <position position="105"/>
    </location>
</feature>
<feature type="binding site" evidence="2">
    <location>
        <begin position="220"/>
        <end position="226"/>
    </location>
    <ligand>
        <name>NAD(+)</name>
        <dbReference type="ChEBI" id="CHEBI:57540"/>
    </ligand>
</feature>
<evidence type="ECO:0000250" key="1"/>
<evidence type="ECO:0000255" key="2"/>
<evidence type="ECO:0000255" key="3">
    <source>
        <dbReference type="PROSITE-ProRule" id="PRU10011"/>
    </source>
</evidence>
<evidence type="ECO:0000305" key="4"/>
<accession>P0CL72</accession>
<accession>O52310</accession>
<name>DHE3_PYRHR</name>
<organism>
    <name type="scientific">Pyrococcus horikoshii</name>
    <dbReference type="NCBI Taxonomy" id="53953"/>
    <lineage>
        <taxon>Archaea</taxon>
        <taxon>Methanobacteriati</taxon>
        <taxon>Methanobacteriota</taxon>
        <taxon>Thermococci</taxon>
        <taxon>Thermococcales</taxon>
        <taxon>Thermococcaceae</taxon>
        <taxon>Pyrococcus</taxon>
    </lineage>
</organism>
<reference key="1">
    <citation type="submission" date="1997-11" db="EMBL/GenBank/DDBJ databases">
        <authorList>
            <person name="Gonzalez J.M."/>
            <person name="Robb F.T."/>
            <person name="Kato C."/>
        </authorList>
    </citation>
    <scope>NUCLEOTIDE SEQUENCE [GENOMIC DNA]</scope>
    <source>
        <strain>JA1</strain>
    </source>
</reference>